<accession>Q1MIC2</accession>
<dbReference type="EMBL" id="AM236080">
    <property type="protein sequence ID" value="CAK07288.1"/>
    <property type="molecule type" value="Genomic_DNA"/>
</dbReference>
<dbReference type="RefSeq" id="WP_003547567.1">
    <property type="nucleotide sequence ID" value="NC_008380.1"/>
</dbReference>
<dbReference type="SMR" id="Q1MIC2"/>
<dbReference type="EnsemblBacteria" id="CAK07288">
    <property type="protein sequence ID" value="CAK07288"/>
    <property type="gene ID" value="RL1793"/>
</dbReference>
<dbReference type="GeneID" id="84669506"/>
<dbReference type="KEGG" id="rle:RL1793"/>
<dbReference type="eggNOG" id="COG0200">
    <property type="taxonomic scope" value="Bacteria"/>
</dbReference>
<dbReference type="HOGENOM" id="CLU_055188_4_0_5"/>
<dbReference type="Proteomes" id="UP000006575">
    <property type="component" value="Chromosome"/>
</dbReference>
<dbReference type="GO" id="GO:0022625">
    <property type="term" value="C:cytosolic large ribosomal subunit"/>
    <property type="evidence" value="ECO:0007669"/>
    <property type="project" value="TreeGrafter"/>
</dbReference>
<dbReference type="GO" id="GO:0019843">
    <property type="term" value="F:rRNA binding"/>
    <property type="evidence" value="ECO:0007669"/>
    <property type="project" value="UniProtKB-UniRule"/>
</dbReference>
<dbReference type="GO" id="GO:0003735">
    <property type="term" value="F:structural constituent of ribosome"/>
    <property type="evidence" value="ECO:0007669"/>
    <property type="project" value="InterPro"/>
</dbReference>
<dbReference type="GO" id="GO:0006412">
    <property type="term" value="P:translation"/>
    <property type="evidence" value="ECO:0007669"/>
    <property type="project" value="UniProtKB-UniRule"/>
</dbReference>
<dbReference type="Gene3D" id="3.100.10.10">
    <property type="match status" value="1"/>
</dbReference>
<dbReference type="HAMAP" id="MF_01341">
    <property type="entry name" value="Ribosomal_uL15"/>
    <property type="match status" value="1"/>
</dbReference>
<dbReference type="InterPro" id="IPR030878">
    <property type="entry name" value="Ribosomal_uL15"/>
</dbReference>
<dbReference type="InterPro" id="IPR021131">
    <property type="entry name" value="Ribosomal_uL15/eL18"/>
</dbReference>
<dbReference type="InterPro" id="IPR036227">
    <property type="entry name" value="Ribosomal_uL15/eL18_sf"/>
</dbReference>
<dbReference type="InterPro" id="IPR005749">
    <property type="entry name" value="Ribosomal_uL15_bac-type"/>
</dbReference>
<dbReference type="InterPro" id="IPR001196">
    <property type="entry name" value="Ribosomal_uL15_CS"/>
</dbReference>
<dbReference type="NCBIfam" id="TIGR01071">
    <property type="entry name" value="rplO_bact"/>
    <property type="match status" value="1"/>
</dbReference>
<dbReference type="PANTHER" id="PTHR12934">
    <property type="entry name" value="50S RIBOSOMAL PROTEIN L15"/>
    <property type="match status" value="1"/>
</dbReference>
<dbReference type="PANTHER" id="PTHR12934:SF11">
    <property type="entry name" value="LARGE RIBOSOMAL SUBUNIT PROTEIN UL15M"/>
    <property type="match status" value="1"/>
</dbReference>
<dbReference type="Pfam" id="PF00828">
    <property type="entry name" value="Ribosomal_L27A"/>
    <property type="match status" value="1"/>
</dbReference>
<dbReference type="SUPFAM" id="SSF52080">
    <property type="entry name" value="Ribosomal proteins L15p and L18e"/>
    <property type="match status" value="1"/>
</dbReference>
<dbReference type="PROSITE" id="PS00475">
    <property type="entry name" value="RIBOSOMAL_L15"/>
    <property type="match status" value="1"/>
</dbReference>
<name>RL15_RHIJ3</name>
<comment type="function">
    <text evidence="1">Binds to the 23S rRNA.</text>
</comment>
<comment type="subunit">
    <text evidence="1">Part of the 50S ribosomal subunit.</text>
</comment>
<comment type="similarity">
    <text evidence="1">Belongs to the universal ribosomal protein uL15 family.</text>
</comment>
<keyword id="KW-0687">Ribonucleoprotein</keyword>
<keyword id="KW-0689">Ribosomal protein</keyword>
<keyword id="KW-0694">RNA-binding</keyword>
<keyword id="KW-0699">rRNA-binding</keyword>
<reference key="1">
    <citation type="journal article" date="2006" name="Genome Biol.">
        <title>The genome of Rhizobium leguminosarum has recognizable core and accessory components.</title>
        <authorList>
            <person name="Young J.P.W."/>
            <person name="Crossman L.C."/>
            <person name="Johnston A.W.B."/>
            <person name="Thomson N.R."/>
            <person name="Ghazoui Z.F."/>
            <person name="Hull K.H."/>
            <person name="Wexler M."/>
            <person name="Curson A.R.J."/>
            <person name="Todd J.D."/>
            <person name="Poole P.S."/>
            <person name="Mauchline T.H."/>
            <person name="East A.K."/>
            <person name="Quail M.A."/>
            <person name="Churcher C."/>
            <person name="Arrowsmith C."/>
            <person name="Cherevach I."/>
            <person name="Chillingworth T."/>
            <person name="Clarke K."/>
            <person name="Cronin A."/>
            <person name="Davis P."/>
            <person name="Fraser A."/>
            <person name="Hance Z."/>
            <person name="Hauser H."/>
            <person name="Jagels K."/>
            <person name="Moule S."/>
            <person name="Mungall K."/>
            <person name="Norbertczak H."/>
            <person name="Rabbinowitsch E."/>
            <person name="Sanders M."/>
            <person name="Simmonds M."/>
            <person name="Whitehead S."/>
            <person name="Parkhill J."/>
        </authorList>
    </citation>
    <scope>NUCLEOTIDE SEQUENCE [LARGE SCALE GENOMIC DNA]</scope>
    <source>
        <strain>DSM 114642 / LMG 32736 / 3841</strain>
    </source>
</reference>
<gene>
    <name evidence="1" type="primary">rplO</name>
    <name type="ordered locus">RL1793</name>
</gene>
<evidence type="ECO:0000255" key="1">
    <source>
        <dbReference type="HAMAP-Rule" id="MF_01341"/>
    </source>
</evidence>
<evidence type="ECO:0000256" key="2">
    <source>
        <dbReference type="SAM" id="MobiDB-lite"/>
    </source>
</evidence>
<evidence type="ECO:0000305" key="3"/>
<proteinExistence type="inferred from homology"/>
<organism>
    <name type="scientific">Rhizobium johnstonii (strain DSM 114642 / LMG 32736 / 3841)</name>
    <name type="common">Rhizobium leguminosarum bv. viciae</name>
    <dbReference type="NCBI Taxonomy" id="216596"/>
    <lineage>
        <taxon>Bacteria</taxon>
        <taxon>Pseudomonadati</taxon>
        <taxon>Pseudomonadota</taxon>
        <taxon>Alphaproteobacteria</taxon>
        <taxon>Hyphomicrobiales</taxon>
        <taxon>Rhizobiaceae</taxon>
        <taxon>Rhizobium/Agrobacterium group</taxon>
        <taxon>Rhizobium</taxon>
        <taxon>Rhizobium johnstonii</taxon>
    </lineage>
</organism>
<sequence length="158" mass="16339">MKLNEIKDNEGSTHSRKRLGRGIGSGSGKTGGRGVKGQKSRSGVAINGFEGGQMPIYRRLPKRGFNNIFASDFVVVSLARIQTAIDAGKLDAKTTVDAAALKAAGVIRRVKDGVRVLADGEIKAKITIVVAGASKPAVEKIEKAGGTVTLLSAPAAAE</sequence>
<feature type="chain" id="PRO_0000251547" description="Large ribosomal subunit protein uL15">
    <location>
        <begin position="1"/>
        <end position="158"/>
    </location>
</feature>
<feature type="region of interest" description="Disordered" evidence="2">
    <location>
        <begin position="1"/>
        <end position="45"/>
    </location>
</feature>
<feature type="compositionally biased region" description="Basic and acidic residues" evidence="2">
    <location>
        <begin position="1"/>
        <end position="13"/>
    </location>
</feature>
<feature type="compositionally biased region" description="Gly residues" evidence="2">
    <location>
        <begin position="21"/>
        <end position="35"/>
    </location>
</feature>
<protein>
    <recommendedName>
        <fullName evidence="1">Large ribosomal subunit protein uL15</fullName>
    </recommendedName>
    <alternativeName>
        <fullName evidence="3">50S ribosomal protein L15</fullName>
    </alternativeName>
</protein>